<gene>
    <name type="primary">PANK3</name>
</gene>
<proteinExistence type="evidence at transcript level"/>
<evidence type="ECO:0000250" key="1">
    <source>
        <dbReference type="UniProtKB" id="Q9H999"/>
    </source>
</evidence>
<evidence type="ECO:0000305" key="2"/>
<protein>
    <recommendedName>
        <fullName>Pantothenate kinase 3</fullName>
        <ecNumber evidence="1">2.7.1.33</ecNumber>
    </recommendedName>
    <alternativeName>
        <fullName>Pantothenic acid kinase 3</fullName>
    </alternativeName>
</protein>
<dbReference type="EC" id="2.7.1.33" evidence="1"/>
<dbReference type="EMBL" id="BC123859">
    <property type="protein sequence ID" value="AAI23860.1"/>
    <property type="molecule type" value="mRNA"/>
</dbReference>
<dbReference type="RefSeq" id="NP_001068931.1">
    <property type="nucleotide sequence ID" value="NM_001075463.1"/>
</dbReference>
<dbReference type="SMR" id="Q08DA5"/>
<dbReference type="FunCoup" id="Q08DA5">
    <property type="interactions" value="3777"/>
</dbReference>
<dbReference type="STRING" id="9913.ENSBTAP00000015780"/>
<dbReference type="PaxDb" id="9913-ENSBTAP00000015780"/>
<dbReference type="Ensembl" id="ENSBTAT00000015780.5">
    <property type="protein sequence ID" value="ENSBTAP00000015780.3"/>
    <property type="gene ID" value="ENSBTAG00000011895.5"/>
</dbReference>
<dbReference type="GeneID" id="510749"/>
<dbReference type="KEGG" id="bta:510749"/>
<dbReference type="CTD" id="79646"/>
<dbReference type="VEuPathDB" id="HostDB:ENSBTAG00000011895"/>
<dbReference type="VGNC" id="VGNC:32565">
    <property type="gene designation" value="PANK3"/>
</dbReference>
<dbReference type="eggNOG" id="KOG2201">
    <property type="taxonomic scope" value="Eukaryota"/>
</dbReference>
<dbReference type="GeneTree" id="ENSGT00940000156396"/>
<dbReference type="HOGENOM" id="CLU_011154_0_1_1"/>
<dbReference type="InParanoid" id="Q08DA5"/>
<dbReference type="OMA" id="FKNPDIC"/>
<dbReference type="OrthoDB" id="275583at2759"/>
<dbReference type="TreeFam" id="TF314866"/>
<dbReference type="Reactome" id="R-BTA-196783">
    <property type="pathway name" value="Coenzyme A biosynthesis"/>
</dbReference>
<dbReference type="UniPathway" id="UPA00241">
    <property type="reaction ID" value="UER00352"/>
</dbReference>
<dbReference type="Proteomes" id="UP000009136">
    <property type="component" value="Chromosome 20"/>
</dbReference>
<dbReference type="Bgee" id="ENSBTAG00000011895">
    <property type="expression patterns" value="Expressed in liver and 112 other cell types or tissues"/>
</dbReference>
<dbReference type="GO" id="GO:0005829">
    <property type="term" value="C:cytosol"/>
    <property type="evidence" value="ECO:0000250"/>
    <property type="project" value="UniProtKB"/>
</dbReference>
<dbReference type="GO" id="GO:0005634">
    <property type="term" value="C:nucleus"/>
    <property type="evidence" value="ECO:0000318"/>
    <property type="project" value="GO_Central"/>
</dbReference>
<dbReference type="GO" id="GO:1905502">
    <property type="term" value="F:acetyl-CoA binding"/>
    <property type="evidence" value="ECO:0000250"/>
    <property type="project" value="UniProtKB"/>
</dbReference>
<dbReference type="GO" id="GO:0005524">
    <property type="term" value="F:ATP binding"/>
    <property type="evidence" value="ECO:0000250"/>
    <property type="project" value="UniProtKB"/>
</dbReference>
<dbReference type="GO" id="GO:0004594">
    <property type="term" value="F:pantothenate kinase activity"/>
    <property type="evidence" value="ECO:0000250"/>
    <property type="project" value="UniProtKB"/>
</dbReference>
<dbReference type="GO" id="GO:0042803">
    <property type="term" value="F:protein homodimerization activity"/>
    <property type="evidence" value="ECO:0000250"/>
    <property type="project" value="UniProtKB"/>
</dbReference>
<dbReference type="GO" id="GO:0019842">
    <property type="term" value="F:vitamin binding"/>
    <property type="evidence" value="ECO:0000250"/>
    <property type="project" value="UniProtKB"/>
</dbReference>
<dbReference type="GO" id="GO:0015937">
    <property type="term" value="P:coenzyme A biosynthetic process"/>
    <property type="evidence" value="ECO:0000250"/>
    <property type="project" value="UniProtKB"/>
</dbReference>
<dbReference type="GO" id="GO:0016310">
    <property type="term" value="P:phosphorylation"/>
    <property type="evidence" value="ECO:0000250"/>
    <property type="project" value="UniProtKB"/>
</dbReference>
<dbReference type="CDD" id="cd24137">
    <property type="entry name" value="ASKHA_NBD_PanK-II_Pank3"/>
    <property type="match status" value="1"/>
</dbReference>
<dbReference type="FunFam" id="3.30.420.40:FF:000025">
    <property type="entry name" value="pantothenate kinase 2, mitochondrial"/>
    <property type="match status" value="1"/>
</dbReference>
<dbReference type="FunFam" id="3.30.420.510:FF:000001">
    <property type="entry name" value="pantothenate kinase 2, mitochondrial"/>
    <property type="match status" value="1"/>
</dbReference>
<dbReference type="Gene3D" id="3.30.420.40">
    <property type="match status" value="1"/>
</dbReference>
<dbReference type="Gene3D" id="3.30.420.510">
    <property type="match status" value="1"/>
</dbReference>
<dbReference type="InterPro" id="IPR043129">
    <property type="entry name" value="ATPase_NBD"/>
</dbReference>
<dbReference type="InterPro" id="IPR004567">
    <property type="entry name" value="Type_II_PanK"/>
</dbReference>
<dbReference type="NCBIfam" id="TIGR00555">
    <property type="entry name" value="panK_eukar"/>
    <property type="match status" value="1"/>
</dbReference>
<dbReference type="PANTHER" id="PTHR12280">
    <property type="entry name" value="PANTOTHENATE KINASE"/>
    <property type="match status" value="1"/>
</dbReference>
<dbReference type="PANTHER" id="PTHR12280:SF21">
    <property type="entry name" value="PANTOTHENATE KINASE 3"/>
    <property type="match status" value="1"/>
</dbReference>
<dbReference type="Pfam" id="PF03630">
    <property type="entry name" value="Fumble"/>
    <property type="match status" value="1"/>
</dbReference>
<dbReference type="SUPFAM" id="SSF53067">
    <property type="entry name" value="Actin-like ATPase domain"/>
    <property type="match status" value="2"/>
</dbReference>
<comment type="function">
    <text evidence="1">Catalyzes the phosphorylation of pantothenate to generate 4'-phosphopantothenate in the first and rate-determining step of coenzyme A (CoA) synthesis.</text>
</comment>
<comment type="catalytic activity">
    <reaction evidence="1">
        <text>(R)-pantothenate + ATP = (R)-4'-phosphopantothenate + ADP + H(+)</text>
        <dbReference type="Rhea" id="RHEA:16373"/>
        <dbReference type="ChEBI" id="CHEBI:10986"/>
        <dbReference type="ChEBI" id="CHEBI:15378"/>
        <dbReference type="ChEBI" id="CHEBI:29032"/>
        <dbReference type="ChEBI" id="CHEBI:30616"/>
        <dbReference type="ChEBI" id="CHEBI:456216"/>
        <dbReference type="EC" id="2.7.1.33"/>
    </reaction>
</comment>
<comment type="activity regulation">
    <text evidence="1">Subject to allosteric regulation, exists in two distinct conformational states, a catalytically incompetent (or open) conformation stabilized by the binding of acetyl(acyl)-CoA, and a catalytically competent (or closed) conformation stabilized by ATP-binding. Inhibited by acetyl-CoA and its thioesters which act as allosteric inhibitors and compete with the ATP-binding site.</text>
</comment>
<comment type="pathway">
    <text evidence="1">Cofactor biosynthesis; coenzyme A biosynthesis; CoA from (R)-pantothenate: step 1/5.</text>
</comment>
<comment type="subunit">
    <text evidence="1">Homodimer.</text>
</comment>
<comment type="subcellular location">
    <subcellularLocation>
        <location evidence="2">Cytoplasm</location>
    </subcellularLocation>
</comment>
<comment type="similarity">
    <text evidence="2">Belongs to the type II pantothenate kinase family.</text>
</comment>
<sequence>MKIKDAKKPSFPWFGMDIGGTLVKLSYFEPIDITAEEEQEEVESLKSIRKYLTSNVAYGSTGIRDVHLELKDLTLFGRRGNLHFIRFPTQDLPTFIQMGRDKNFSTLHTVLCATGGGAYKFEKDFRTIGNLHLHKLDELDCLVKGLLYIDSVSFNGQAECYYFANASEPERCQKMPFNLDDPYPLLVVNIGSGVSILAVHSKDNYKRVTGTSLGGGTFLGLCSLLTGCESFEEALEMASKGDSTQADKLVRDIYGGDYERFGLPGWAVASSFGNMIYKEKRESVSKEDLARATLVTITNNIGSIARMCAVNEKINRVVFVGNFLRVNTLSMKLLAYALDYWSKGQLKALFLEHEGYFGAVGALLGLPNFS</sequence>
<feature type="chain" id="PRO_0000261356" description="Pantothenate kinase 3">
    <location>
        <begin position="1"/>
        <end position="370"/>
    </location>
</feature>
<feature type="active site" description="Proton acceptor" evidence="1">
    <location>
        <position position="138"/>
    </location>
</feature>
<feature type="binding site" evidence="1">
    <location>
        <position position="192"/>
    </location>
    <ligand>
        <name>acetyl-CoA</name>
        <dbReference type="ChEBI" id="CHEBI:57288"/>
    </ligand>
</feature>
<feature type="binding site" evidence="1">
    <location>
        <position position="195"/>
    </location>
    <ligand>
        <name>acetyl-CoA</name>
        <dbReference type="ChEBI" id="CHEBI:57288"/>
    </ligand>
</feature>
<feature type="binding site" evidence="1">
    <location>
        <position position="207"/>
    </location>
    <ligand>
        <name>acetyl-CoA</name>
        <dbReference type="ChEBI" id="CHEBI:57288"/>
    </ligand>
</feature>
<organism>
    <name type="scientific">Bos taurus</name>
    <name type="common">Bovine</name>
    <dbReference type="NCBI Taxonomy" id="9913"/>
    <lineage>
        <taxon>Eukaryota</taxon>
        <taxon>Metazoa</taxon>
        <taxon>Chordata</taxon>
        <taxon>Craniata</taxon>
        <taxon>Vertebrata</taxon>
        <taxon>Euteleostomi</taxon>
        <taxon>Mammalia</taxon>
        <taxon>Eutheria</taxon>
        <taxon>Laurasiatheria</taxon>
        <taxon>Artiodactyla</taxon>
        <taxon>Ruminantia</taxon>
        <taxon>Pecora</taxon>
        <taxon>Bovidae</taxon>
        <taxon>Bovinae</taxon>
        <taxon>Bos</taxon>
    </lineage>
</organism>
<name>PANK3_BOVIN</name>
<accession>Q08DA5</accession>
<reference key="1">
    <citation type="submission" date="2006-09" db="EMBL/GenBank/DDBJ databases">
        <authorList>
            <consortium name="NIH - Mammalian Gene Collection (MGC) project"/>
        </authorList>
    </citation>
    <scope>NUCLEOTIDE SEQUENCE [LARGE SCALE MRNA]</scope>
    <source>
        <strain>Hereford</strain>
        <tissue>Basal ganglia</tissue>
    </source>
</reference>
<keyword id="KW-0067">ATP-binding</keyword>
<keyword id="KW-0173">Coenzyme A biosynthesis</keyword>
<keyword id="KW-0963">Cytoplasm</keyword>
<keyword id="KW-0418">Kinase</keyword>
<keyword id="KW-0547">Nucleotide-binding</keyword>
<keyword id="KW-1185">Reference proteome</keyword>
<keyword id="KW-0808">Transferase</keyword>